<dbReference type="EC" id="2.7.7.6" evidence="1"/>
<dbReference type="EMBL" id="DQ119058">
    <property type="protein sequence ID" value="AAZ94643.1"/>
    <property type="molecule type" value="Genomic_DNA"/>
</dbReference>
<dbReference type="EMBL" id="AJ970307">
    <property type="protein sequence ID" value="CAJ00750.1"/>
    <property type="molecule type" value="Genomic_DNA"/>
</dbReference>
<dbReference type="EMBL" id="DQ865975">
    <property type="protein sequence ID" value="ABI97409.1"/>
    <property type="molecule type" value="Genomic_DNA"/>
</dbReference>
<dbReference type="EMBL" id="DQ865976">
    <property type="protein sequence ID" value="ABI98737.1"/>
    <property type="molecule type" value="Genomic_DNA"/>
</dbReference>
<dbReference type="RefSeq" id="YP_247591.1">
    <property type="nucleotide sequence ID" value="NC_007144.1"/>
</dbReference>
<dbReference type="SMR" id="Q4VZP1"/>
<dbReference type="GeneID" id="3429302"/>
<dbReference type="KEGG" id="csv:3429302"/>
<dbReference type="eggNOG" id="KOG0214">
    <property type="taxonomic scope" value="Eukaryota"/>
</dbReference>
<dbReference type="OrthoDB" id="1927092at2759"/>
<dbReference type="GO" id="GO:0009507">
    <property type="term" value="C:chloroplast"/>
    <property type="evidence" value="ECO:0007669"/>
    <property type="project" value="UniProtKB-SubCell"/>
</dbReference>
<dbReference type="GO" id="GO:0000428">
    <property type="term" value="C:DNA-directed RNA polymerase complex"/>
    <property type="evidence" value="ECO:0007669"/>
    <property type="project" value="UniProtKB-KW"/>
</dbReference>
<dbReference type="GO" id="GO:0005739">
    <property type="term" value="C:mitochondrion"/>
    <property type="evidence" value="ECO:0007669"/>
    <property type="project" value="GOC"/>
</dbReference>
<dbReference type="GO" id="GO:0003677">
    <property type="term" value="F:DNA binding"/>
    <property type="evidence" value="ECO:0007669"/>
    <property type="project" value="UniProtKB-UniRule"/>
</dbReference>
<dbReference type="GO" id="GO:0003899">
    <property type="term" value="F:DNA-directed RNA polymerase activity"/>
    <property type="evidence" value="ECO:0007669"/>
    <property type="project" value="UniProtKB-UniRule"/>
</dbReference>
<dbReference type="GO" id="GO:0032549">
    <property type="term" value="F:ribonucleoside binding"/>
    <property type="evidence" value="ECO:0007669"/>
    <property type="project" value="InterPro"/>
</dbReference>
<dbReference type="GO" id="GO:0006351">
    <property type="term" value="P:DNA-templated transcription"/>
    <property type="evidence" value="ECO:0007669"/>
    <property type="project" value="UniProtKB-UniRule"/>
</dbReference>
<dbReference type="CDD" id="cd00653">
    <property type="entry name" value="RNA_pol_B_RPB2"/>
    <property type="match status" value="1"/>
</dbReference>
<dbReference type="FunFam" id="2.40.50.150:FF:000006">
    <property type="entry name" value="DNA-directed RNA polymerase subunit beta"/>
    <property type="match status" value="1"/>
</dbReference>
<dbReference type="FunFam" id="3.90.1110.10:FF:000009">
    <property type="entry name" value="DNA-directed RNA polymerase subunit beta"/>
    <property type="match status" value="1"/>
</dbReference>
<dbReference type="Gene3D" id="2.40.50.100">
    <property type="match status" value="1"/>
</dbReference>
<dbReference type="Gene3D" id="2.40.50.150">
    <property type="match status" value="1"/>
</dbReference>
<dbReference type="Gene3D" id="3.90.1100.10">
    <property type="match status" value="1"/>
</dbReference>
<dbReference type="Gene3D" id="2.30.150.10">
    <property type="entry name" value="DNA-directed RNA polymerase, beta subunit, external 1 domain"/>
    <property type="match status" value="1"/>
</dbReference>
<dbReference type="Gene3D" id="2.40.270.10">
    <property type="entry name" value="DNA-directed RNA polymerase, subunit 2, domain 6"/>
    <property type="match status" value="2"/>
</dbReference>
<dbReference type="Gene3D" id="3.90.1800.10">
    <property type="entry name" value="RNA polymerase alpha subunit dimerisation domain"/>
    <property type="match status" value="1"/>
</dbReference>
<dbReference type="Gene3D" id="3.90.1110.10">
    <property type="entry name" value="RNA polymerase Rpb2, domain 2"/>
    <property type="match status" value="1"/>
</dbReference>
<dbReference type="HAMAP" id="MF_01321">
    <property type="entry name" value="RNApol_bact_RpoB"/>
    <property type="match status" value="1"/>
</dbReference>
<dbReference type="InterPro" id="IPR042107">
    <property type="entry name" value="DNA-dir_RNA_pol_bsu_ext_1_sf"/>
</dbReference>
<dbReference type="InterPro" id="IPR015712">
    <property type="entry name" value="DNA-dir_RNA_pol_su2"/>
</dbReference>
<dbReference type="InterPro" id="IPR007120">
    <property type="entry name" value="DNA-dir_RNAP_su2_dom"/>
</dbReference>
<dbReference type="InterPro" id="IPR037033">
    <property type="entry name" value="DNA-dir_RNAP_su2_hyb_sf"/>
</dbReference>
<dbReference type="InterPro" id="IPR010243">
    <property type="entry name" value="RNA_pol_bsu_bac"/>
</dbReference>
<dbReference type="InterPro" id="IPR007121">
    <property type="entry name" value="RNA_pol_bsu_CS"/>
</dbReference>
<dbReference type="InterPro" id="IPR007642">
    <property type="entry name" value="RNA_pol_Rpb2_2"/>
</dbReference>
<dbReference type="InterPro" id="IPR037034">
    <property type="entry name" value="RNA_pol_Rpb2_2_sf"/>
</dbReference>
<dbReference type="InterPro" id="IPR007645">
    <property type="entry name" value="RNA_pol_Rpb2_3"/>
</dbReference>
<dbReference type="InterPro" id="IPR007641">
    <property type="entry name" value="RNA_pol_Rpb2_7"/>
</dbReference>
<dbReference type="InterPro" id="IPR014724">
    <property type="entry name" value="RNA_pol_RPB2_OB-fold"/>
</dbReference>
<dbReference type="NCBIfam" id="NF001616">
    <property type="entry name" value="PRK00405.1"/>
    <property type="match status" value="1"/>
</dbReference>
<dbReference type="PANTHER" id="PTHR20856">
    <property type="entry name" value="DNA-DIRECTED RNA POLYMERASE I SUBUNIT 2"/>
    <property type="match status" value="1"/>
</dbReference>
<dbReference type="Pfam" id="PF04561">
    <property type="entry name" value="RNA_pol_Rpb2_2"/>
    <property type="match status" value="1"/>
</dbReference>
<dbReference type="Pfam" id="PF04565">
    <property type="entry name" value="RNA_pol_Rpb2_3"/>
    <property type="match status" value="1"/>
</dbReference>
<dbReference type="Pfam" id="PF00562">
    <property type="entry name" value="RNA_pol_Rpb2_6"/>
    <property type="match status" value="1"/>
</dbReference>
<dbReference type="Pfam" id="PF04560">
    <property type="entry name" value="RNA_pol_Rpb2_7"/>
    <property type="match status" value="1"/>
</dbReference>
<dbReference type="SUPFAM" id="SSF64484">
    <property type="entry name" value="beta and beta-prime subunits of DNA dependent RNA-polymerase"/>
    <property type="match status" value="1"/>
</dbReference>
<dbReference type="PROSITE" id="PS01166">
    <property type="entry name" value="RNA_POL_BETA"/>
    <property type="match status" value="1"/>
</dbReference>
<evidence type="ECO:0000255" key="1">
    <source>
        <dbReference type="HAMAP-Rule" id="MF_01321"/>
    </source>
</evidence>
<evidence type="ECO:0000305" key="2"/>
<reference key="1">
    <citation type="journal article" date="2006" name="Plant Cell Rep.">
        <title>Complete sequence and organization of the cucumber (Cucumis sativus L. cv. Baekmibaekdadagi) chloroplast genome.</title>
        <authorList>
            <person name="Kim J.-S."/>
            <person name="Jung J.D."/>
            <person name="Lee J.-A."/>
            <person name="Park H.-W."/>
            <person name="Oh K.-H."/>
            <person name="Jeong W.J."/>
            <person name="Choi D.-W."/>
            <person name="Liu J.R."/>
            <person name="Cho K.Y."/>
        </authorList>
    </citation>
    <scope>NUCLEOTIDE SEQUENCE [LARGE SCALE GENOMIC DNA]</scope>
    <source>
        <strain>cv. Baekmibaekdadagi</strain>
    </source>
</reference>
<reference key="2">
    <citation type="journal article" date="2007" name="Cell. Mol. Biol. Lett.">
        <title>The complete structure of the cucumber (Cucumis sativus L.) chloroplast genome: its composition and comparative analysis.</title>
        <authorList>
            <person name="Plader W.W."/>
            <person name="Yukawa Y."/>
            <person name="Sugiura M."/>
            <person name="Malepszy S."/>
        </authorList>
    </citation>
    <scope>NUCLEOTIDE SEQUENCE [LARGE SCALE GENOMIC DNA]</scope>
    <source>
        <strain>cv. Borszczagowski</strain>
    </source>
</reference>
<reference key="3">
    <citation type="journal article" date="2007" name="Genome">
        <title>Sequencing cucumber (Cucumis sativus L.) chloroplast genomes identifies differences between chilling-tolerant and -susceptible cucumber lines.</title>
        <authorList>
            <person name="Chung S.-M."/>
            <person name="Gordon V.S."/>
            <person name="Staub J.E."/>
        </authorList>
    </citation>
    <scope>NUCLEOTIDE SEQUENCE [LARGE SCALE GENOMIC DNA]</scope>
    <source>
        <strain>cv. Chipper</strain>
        <strain>cv. Gy14</strain>
    </source>
</reference>
<gene>
    <name evidence="1" type="primary">rpoB</name>
    <name type="ordered locus">CsCp018</name>
</gene>
<protein>
    <recommendedName>
        <fullName evidence="1">DNA-directed RNA polymerase subunit beta</fullName>
        <ecNumber evidence="1">2.7.7.6</ecNumber>
    </recommendedName>
    <alternativeName>
        <fullName evidence="1">PEP</fullName>
    </alternativeName>
    <alternativeName>
        <fullName evidence="1">Plastid-encoded RNA polymerase subunit beta</fullName>
        <shortName evidence="1">RNA polymerase subunit beta</shortName>
    </alternativeName>
</protein>
<feature type="chain" id="PRO_0000224126" description="DNA-directed RNA polymerase subunit beta">
    <location>
        <begin position="1"/>
        <end position="1070"/>
    </location>
</feature>
<feature type="sequence conflict" description="In Ref. 2; CAJ00750." evidence="2" ref="2">
    <original>A</original>
    <variation>AK</variation>
    <location>
        <position position="912"/>
    </location>
</feature>
<name>RPOB_CUCSA</name>
<accession>Q4VZP1</accession>
<accession>A5J1S6</accession>
<accession>Q2QD97</accession>
<organism>
    <name type="scientific">Cucumis sativus</name>
    <name type="common">Cucumber</name>
    <dbReference type="NCBI Taxonomy" id="3659"/>
    <lineage>
        <taxon>Eukaryota</taxon>
        <taxon>Viridiplantae</taxon>
        <taxon>Streptophyta</taxon>
        <taxon>Embryophyta</taxon>
        <taxon>Tracheophyta</taxon>
        <taxon>Spermatophyta</taxon>
        <taxon>Magnoliopsida</taxon>
        <taxon>eudicotyledons</taxon>
        <taxon>Gunneridae</taxon>
        <taxon>Pentapetalae</taxon>
        <taxon>rosids</taxon>
        <taxon>fabids</taxon>
        <taxon>Cucurbitales</taxon>
        <taxon>Cucurbitaceae</taxon>
        <taxon>Benincaseae</taxon>
        <taxon>Cucumis</taxon>
    </lineage>
</organism>
<geneLocation type="chloroplast"/>
<keyword id="KW-0150">Chloroplast</keyword>
<keyword id="KW-0240">DNA-directed RNA polymerase</keyword>
<keyword id="KW-0548">Nucleotidyltransferase</keyword>
<keyword id="KW-0934">Plastid</keyword>
<keyword id="KW-0804">Transcription</keyword>
<keyword id="KW-0808">Transferase</keyword>
<sequence>MLGGGNERMSTIPAFNQIQFEGFCRFIDHGLTEELSKFPKIEDTDQEIEFQLFVETYKLVEPLIKERDAVYESLTYSSELYVSAGLIWKTRRDMQEQTIFIGNIPLMNSLGTSIVNGLYRIVISQILQSPGIYYRSELDHNGISVYTGTIISDWGGRLELEIDRKARIWARVSRKQKISILVLSSAMGSNLREILENVCYPEIFLSFLNDKEKKKIGSKENAILEFYQQFSCVGGDPVFSESLCKELQKKFFQQRCELGRIGRRNLNQRLNLDIPENNTFLLQRDILAAADHLIGLKFGMGTLDDMNHLKNKRIRSVADLLQDQFGLALVRLENMVRGTICGAIRHKLIPTPQNLVTSTPLTTTFESFFGLHPLSQVLDRTNPLTQIVHGRKLSYLGPGGLTGRTASFRIRDIHPSHYGRICPIDTSEGINVGLIGSLAIHARIGHWGSLETPFYEISERSKKVRMLYLSPSRDEYYMVATGNSLALNPGIQEEQIVPARYRQEFLTIEWEQVHLRSIFPFQYFSIGASLIPFIEHNDANRALMSSNMQRQAVPLSRSEKCIVGTGLERQVARDSGVAAIAEHGGKIIYTDTDKIIFSGNGYTRRIPLVMYQRSNKNTCMQQKSQVHQGKCIKKGQILADGAATVGGELALGKNVLVAYMPWEGYNFEDAVLISERLIYEDIYTSFHIRKYEIQTHVTSHGPERITNEIPHLEARLLCNLDKNGIVMLGSWVETGDILVGKLTPQMAKESSYAPEDRLLRAILGIQVSTSKETCLKLPIGGRGRVIDVRWIQKKGGSSYNPEIIRVYISQKREIKVGDKVAGRHGNKGIVSKILPREDMPYLQNGRPVDMVFNPLGVPSRMNVGQIFECSLGLAGSLLDRHYRIVPFDERYEQEASRKLVFSELYEASKQTASPWVFEPEYPGKSRIFDGRTGNPFEQPVIIGKPYILKLIHQVDDKIHGRSSGHYALVTQQPLRGRAKQGGQRVGEMEVWALEGFGVAHILQEMLTYKSDHIRARQEVLGTTIIGGTIPKPEDTPESFRLLVRELRSLALELNHFLVSEKNFQINRKEA</sequence>
<proteinExistence type="inferred from homology"/>
<comment type="function">
    <text evidence="1">DNA-dependent RNA polymerase catalyzes the transcription of DNA into RNA using the four ribonucleoside triphosphates as substrates.</text>
</comment>
<comment type="catalytic activity">
    <reaction evidence="1">
        <text>RNA(n) + a ribonucleoside 5'-triphosphate = RNA(n+1) + diphosphate</text>
        <dbReference type="Rhea" id="RHEA:21248"/>
        <dbReference type="Rhea" id="RHEA-COMP:14527"/>
        <dbReference type="Rhea" id="RHEA-COMP:17342"/>
        <dbReference type="ChEBI" id="CHEBI:33019"/>
        <dbReference type="ChEBI" id="CHEBI:61557"/>
        <dbReference type="ChEBI" id="CHEBI:140395"/>
        <dbReference type="EC" id="2.7.7.6"/>
    </reaction>
</comment>
<comment type="subunit">
    <text evidence="1">In plastids the minimal PEP RNA polymerase catalytic core is composed of four subunits: alpha, beta, beta', and beta''. When a (nuclear-encoded) sigma factor is associated with the core the holoenzyme is formed, which can initiate transcription.</text>
</comment>
<comment type="subcellular location">
    <subcellularLocation>
        <location>Plastid</location>
        <location>Chloroplast</location>
    </subcellularLocation>
</comment>
<comment type="similarity">
    <text evidence="1">Belongs to the RNA polymerase beta chain family.</text>
</comment>